<sequence>MTMTITVSIFGQFFPETLLFIPMNLFSIVFALSWIAFIYPTNWAPSRFQSIWASFRANVLEMIFQNTSPNTAPWAGLITTVFIVILSANVLGLFPYAFTATSHISLTYSLGFPIWMAVNILGFYLAFNSRLSHLVPQGTPSALIPLMVWIETLSLFAQPIALGLRLAANLTAGHLLIFLLSTAIWLLSSSLMVSSIPIFVIFVLLFILEIGVACIEAYVFTALVHFYLQQNV</sequence>
<geneLocation type="mitochondrion"/>
<keyword id="KW-0066">ATP synthesis</keyword>
<keyword id="KW-0138">CF(0)</keyword>
<keyword id="KW-0375">Hydrogen ion transport</keyword>
<keyword id="KW-0406">Ion transport</keyword>
<keyword id="KW-0472">Membrane</keyword>
<keyword id="KW-0496">Mitochondrion</keyword>
<keyword id="KW-0999">Mitochondrion inner membrane</keyword>
<keyword id="KW-0812">Transmembrane</keyword>
<keyword id="KW-1133">Transmembrane helix</keyword>
<keyword id="KW-0813">Transport</keyword>
<feature type="chain" id="PRO_0000082150" description="ATP synthase subunit a">
    <location>
        <begin position="1"/>
        <end position="232"/>
    </location>
</feature>
<feature type="transmembrane region" description="Helical" evidence="1">
    <location>
        <begin position="18"/>
        <end position="38"/>
    </location>
</feature>
<feature type="transmembrane region" description="Helical" evidence="1">
    <location>
        <begin position="74"/>
        <end position="94"/>
    </location>
</feature>
<feature type="transmembrane region" description="Helical" evidence="1">
    <location>
        <begin position="107"/>
        <end position="127"/>
    </location>
</feature>
<feature type="transmembrane region" description="Helical" evidence="1">
    <location>
        <begin position="142"/>
        <end position="162"/>
    </location>
</feature>
<feature type="transmembrane region" description="Helical" evidence="1">
    <location>
        <begin position="173"/>
        <end position="193"/>
    </location>
</feature>
<feature type="transmembrane region" description="Helical" evidence="1">
    <location>
        <begin position="195"/>
        <end position="215"/>
    </location>
</feature>
<gene>
    <name type="primary">ATP6</name>
</gene>
<comment type="function">
    <text>Mitochondrial membrane ATP synthase (F(1)F(0) ATP synthase or Complex V) produces ATP from ADP in the presence of a proton gradient across the membrane which is generated by electron transport complexes of the respiratory chain. F-type ATPases consist of two structural domains, F(1) - containing the extramembraneous catalytic core and F(0) - containing the membrane proton channel, linked together by a central stalk and a peripheral stalk. During catalysis, ATP synthesis in the catalytic domain of F(1) is coupled via a rotary mechanism of the central stalk subunits to proton translocation. Key component of the proton channel; it may play a direct role in the translocation of protons across the membrane.</text>
</comment>
<comment type="subunit">
    <text>F-type ATPases have 2 components, CF(1) - the catalytic core - and CF(0) - the membrane proton channel. CF(1) has five subunits: alpha(3), beta(3), gamma(1), delta(1), epsilon(1). CF(0) has three main subunits: a, b and c.</text>
</comment>
<comment type="subcellular location">
    <subcellularLocation>
        <location>Mitochondrion inner membrane</location>
        <topology>Multi-pass membrane protein</topology>
    </subcellularLocation>
</comment>
<comment type="similarity">
    <text evidence="2">Belongs to the ATPase A chain family.</text>
</comment>
<proteinExistence type="inferred from homology"/>
<reference key="1">
    <citation type="journal article" date="1989" name="J. Biol. Chem.">
        <title>The complete nucleotide sequence, gene organization, and genetic code of the mitochondrial genome of Paracentrotus lividus.</title>
        <authorList>
            <person name="Cantatore P."/>
            <person name="Roberti M."/>
            <person name="Rainaldi G."/>
            <person name="Gadaleta M.N."/>
            <person name="Saccone C."/>
        </authorList>
    </citation>
    <scope>NUCLEOTIDE SEQUENCE [GENOMIC DNA]</scope>
</reference>
<reference key="2">
    <citation type="journal article" date="1987" name="Gene">
        <title>A novel gene order in the Paracentrotus lividus mitochondrial genome.</title>
        <authorList>
            <person name="Cantatore P."/>
            <person name="Roberti M."/>
            <person name="Morisco P."/>
            <person name="Rainaldi G."/>
            <person name="Gadaleta M.N."/>
            <person name="Saccone C."/>
        </authorList>
    </citation>
    <scope>NUCLEOTIDE SEQUENCE [GENOMIC DNA] OF 206-232</scope>
</reference>
<accession>P12696</accession>
<organism>
    <name type="scientific">Paracentrotus lividus</name>
    <name type="common">Common sea urchin</name>
    <dbReference type="NCBI Taxonomy" id="7656"/>
    <lineage>
        <taxon>Eukaryota</taxon>
        <taxon>Metazoa</taxon>
        <taxon>Echinodermata</taxon>
        <taxon>Eleutherozoa</taxon>
        <taxon>Echinozoa</taxon>
        <taxon>Echinoidea</taxon>
        <taxon>Euechinoidea</taxon>
        <taxon>Echinacea</taxon>
        <taxon>Camarodonta</taxon>
        <taxon>Echinidea</taxon>
        <taxon>Echinidae</taxon>
        <taxon>Paracentrotus</taxon>
    </lineage>
</organism>
<name>ATP6_PARLI</name>
<dbReference type="EMBL" id="J04815">
    <property type="protein sequence ID" value="AAA68139.1"/>
    <property type="molecule type" value="Genomic_DNA"/>
</dbReference>
<dbReference type="EMBL" id="M16522">
    <property type="protein sequence ID" value="AAA31993.2"/>
    <property type="molecule type" value="Genomic_DNA"/>
</dbReference>
<dbReference type="PIR" id="G34284">
    <property type="entry name" value="G34284"/>
</dbReference>
<dbReference type="RefSeq" id="NP_008127.1">
    <property type="nucleotide sequence ID" value="NC_001572.1"/>
</dbReference>
<dbReference type="SMR" id="P12696"/>
<dbReference type="GeneID" id="807714"/>
<dbReference type="CTD" id="4508"/>
<dbReference type="GO" id="GO:0005743">
    <property type="term" value="C:mitochondrial inner membrane"/>
    <property type="evidence" value="ECO:0007669"/>
    <property type="project" value="UniProtKB-SubCell"/>
</dbReference>
<dbReference type="GO" id="GO:0045259">
    <property type="term" value="C:proton-transporting ATP synthase complex"/>
    <property type="evidence" value="ECO:0007669"/>
    <property type="project" value="UniProtKB-KW"/>
</dbReference>
<dbReference type="GO" id="GO:0046933">
    <property type="term" value="F:proton-transporting ATP synthase activity, rotational mechanism"/>
    <property type="evidence" value="ECO:0007669"/>
    <property type="project" value="TreeGrafter"/>
</dbReference>
<dbReference type="CDD" id="cd00310">
    <property type="entry name" value="ATP-synt_Fo_a_6"/>
    <property type="match status" value="1"/>
</dbReference>
<dbReference type="Gene3D" id="1.20.120.220">
    <property type="entry name" value="ATP synthase, F0 complex, subunit A"/>
    <property type="match status" value="1"/>
</dbReference>
<dbReference type="InterPro" id="IPR000568">
    <property type="entry name" value="ATP_synth_F0_asu"/>
</dbReference>
<dbReference type="InterPro" id="IPR023011">
    <property type="entry name" value="ATP_synth_F0_asu_AS"/>
</dbReference>
<dbReference type="InterPro" id="IPR045083">
    <property type="entry name" value="ATP_synth_F0_asu_bact/mt"/>
</dbReference>
<dbReference type="InterPro" id="IPR035908">
    <property type="entry name" value="F0_ATP_A_sf"/>
</dbReference>
<dbReference type="NCBIfam" id="TIGR01131">
    <property type="entry name" value="ATP_synt_6_or_A"/>
    <property type="match status" value="1"/>
</dbReference>
<dbReference type="PANTHER" id="PTHR11410">
    <property type="entry name" value="ATP SYNTHASE SUBUNIT A"/>
    <property type="match status" value="1"/>
</dbReference>
<dbReference type="PANTHER" id="PTHR11410:SF0">
    <property type="entry name" value="ATP SYNTHASE SUBUNIT A"/>
    <property type="match status" value="1"/>
</dbReference>
<dbReference type="Pfam" id="PF00119">
    <property type="entry name" value="ATP-synt_A"/>
    <property type="match status" value="1"/>
</dbReference>
<dbReference type="PRINTS" id="PR00123">
    <property type="entry name" value="ATPASEA"/>
</dbReference>
<dbReference type="SUPFAM" id="SSF81336">
    <property type="entry name" value="F1F0 ATP synthase subunit A"/>
    <property type="match status" value="1"/>
</dbReference>
<dbReference type="PROSITE" id="PS00449">
    <property type="entry name" value="ATPASE_A"/>
    <property type="match status" value="1"/>
</dbReference>
<protein>
    <recommendedName>
        <fullName>ATP synthase subunit a</fullName>
    </recommendedName>
    <alternativeName>
        <fullName>F-ATPase protein 6</fullName>
    </alternativeName>
</protein>
<evidence type="ECO:0000255" key="1"/>
<evidence type="ECO:0000305" key="2"/>